<accession>B1IWC0</accession>
<sequence length="421" mass="47126">MSKTHLTEQKFSDFALHPKVVEALEKKGFHNCTPIQALALPLTLAGRDVAGQAQTGTGKTMAFLTSTFHYLLSHPAIADRKVNQPRALIMAPTRELAVQIHADAEPLAEATGLKLGLAYGGDGYDKQLKVLESGVDILIGTTGRLIDYAKQNHINLGAIQVVVLDEADRMYDLGFIKDIRWLFRRMPPANQRLNMLFSATLSYRVRELAFEQMNNAEYIEVEPEQKTGHRIKEELFYPSNEEKMRLLQTLIEEEWPDRAIIFANTKHRCEEIWGHLAADGHRVGLLTGDVAQKKRLRILDEFTRGDLDILVATDVAARGLHIPAVTHVFNYDLPDDCEDYVHRIGRTGRAGASGHSISLACEEYALNLPAIETYIGHSIPVSKYNPDALMTDLPKPLRLTRPRTGNGPRRTGAPRNRRRSG</sequence>
<proteinExistence type="inferred from homology"/>
<gene>
    <name evidence="1" type="primary">rhlB</name>
    <name type="ordered locus">EcolC_4223</name>
</gene>
<comment type="function">
    <text evidence="1">DEAD-box RNA helicase involved in RNA degradation. Has RNA-dependent ATPase activity and unwinds double-stranded RNA.</text>
</comment>
<comment type="catalytic activity">
    <reaction evidence="1">
        <text>ATP + H2O = ADP + phosphate + H(+)</text>
        <dbReference type="Rhea" id="RHEA:13065"/>
        <dbReference type="ChEBI" id="CHEBI:15377"/>
        <dbReference type="ChEBI" id="CHEBI:15378"/>
        <dbReference type="ChEBI" id="CHEBI:30616"/>
        <dbReference type="ChEBI" id="CHEBI:43474"/>
        <dbReference type="ChEBI" id="CHEBI:456216"/>
        <dbReference type="EC" id="3.6.4.13"/>
    </reaction>
</comment>
<comment type="subunit">
    <text evidence="1">Component of the RNA degradosome, which is a multiprotein complex involved in RNA processing and mRNA degradation.</text>
</comment>
<comment type="subcellular location">
    <subcellularLocation>
        <location evidence="1">Cytoplasm</location>
    </subcellularLocation>
</comment>
<comment type="similarity">
    <text evidence="1">Belongs to the DEAD box helicase family. RhlB subfamily.</text>
</comment>
<organism>
    <name type="scientific">Escherichia coli (strain ATCC 8739 / DSM 1576 / NBRC 3972 / NCIMB 8545 / WDCM 00012 / Crooks)</name>
    <dbReference type="NCBI Taxonomy" id="481805"/>
    <lineage>
        <taxon>Bacteria</taxon>
        <taxon>Pseudomonadati</taxon>
        <taxon>Pseudomonadota</taxon>
        <taxon>Gammaproteobacteria</taxon>
        <taxon>Enterobacterales</taxon>
        <taxon>Enterobacteriaceae</taxon>
        <taxon>Escherichia</taxon>
    </lineage>
</organism>
<keyword id="KW-0067">ATP-binding</keyword>
<keyword id="KW-0963">Cytoplasm</keyword>
<keyword id="KW-0347">Helicase</keyword>
<keyword id="KW-0378">Hydrolase</keyword>
<keyword id="KW-0547">Nucleotide-binding</keyword>
<keyword id="KW-0694">RNA-binding</keyword>
<reference key="1">
    <citation type="submission" date="2008-02" db="EMBL/GenBank/DDBJ databases">
        <title>Complete sequence of Escherichia coli C str. ATCC 8739.</title>
        <authorList>
            <person name="Copeland A."/>
            <person name="Lucas S."/>
            <person name="Lapidus A."/>
            <person name="Glavina del Rio T."/>
            <person name="Dalin E."/>
            <person name="Tice H."/>
            <person name="Bruce D."/>
            <person name="Goodwin L."/>
            <person name="Pitluck S."/>
            <person name="Kiss H."/>
            <person name="Brettin T."/>
            <person name="Detter J.C."/>
            <person name="Han C."/>
            <person name="Kuske C.R."/>
            <person name="Schmutz J."/>
            <person name="Larimer F."/>
            <person name="Land M."/>
            <person name="Hauser L."/>
            <person name="Kyrpides N."/>
            <person name="Mikhailova N."/>
            <person name="Ingram L."/>
            <person name="Richardson P."/>
        </authorList>
    </citation>
    <scope>NUCLEOTIDE SEQUENCE [LARGE SCALE GENOMIC DNA]</scope>
    <source>
        <strain>ATCC 8739 / DSM 1576 / NBRC 3972 / NCIMB 8545 / WDCM 00012 / Crooks</strain>
    </source>
</reference>
<evidence type="ECO:0000255" key="1">
    <source>
        <dbReference type="HAMAP-Rule" id="MF_00661"/>
    </source>
</evidence>
<evidence type="ECO:0000256" key="2">
    <source>
        <dbReference type="SAM" id="MobiDB-lite"/>
    </source>
</evidence>
<protein>
    <recommendedName>
        <fullName evidence="1">ATP-dependent RNA helicase RhlB</fullName>
        <ecNumber evidence="1">3.6.4.13</ecNumber>
    </recommendedName>
</protein>
<name>RHLB_ECOLC</name>
<dbReference type="EC" id="3.6.4.13" evidence="1"/>
<dbReference type="EMBL" id="CP000946">
    <property type="protein sequence ID" value="ACA79820.1"/>
    <property type="molecule type" value="Genomic_DNA"/>
</dbReference>
<dbReference type="RefSeq" id="WP_000047499.1">
    <property type="nucleotide sequence ID" value="NZ_MTFT01000015.1"/>
</dbReference>
<dbReference type="SMR" id="B1IWC0"/>
<dbReference type="GeneID" id="93778164"/>
<dbReference type="KEGG" id="ecl:EcolC_4223"/>
<dbReference type="HOGENOM" id="CLU_003041_1_3_6"/>
<dbReference type="GO" id="GO:0005829">
    <property type="term" value="C:cytosol"/>
    <property type="evidence" value="ECO:0007669"/>
    <property type="project" value="TreeGrafter"/>
</dbReference>
<dbReference type="GO" id="GO:0005524">
    <property type="term" value="F:ATP binding"/>
    <property type="evidence" value="ECO:0007669"/>
    <property type="project" value="UniProtKB-UniRule"/>
</dbReference>
<dbReference type="GO" id="GO:0016887">
    <property type="term" value="F:ATP hydrolysis activity"/>
    <property type="evidence" value="ECO:0007669"/>
    <property type="project" value="RHEA"/>
</dbReference>
<dbReference type="GO" id="GO:0003723">
    <property type="term" value="F:RNA binding"/>
    <property type="evidence" value="ECO:0007669"/>
    <property type="project" value="UniProtKB-UniRule"/>
</dbReference>
<dbReference type="GO" id="GO:0003724">
    <property type="term" value="F:RNA helicase activity"/>
    <property type="evidence" value="ECO:0007669"/>
    <property type="project" value="UniProtKB-UniRule"/>
</dbReference>
<dbReference type="GO" id="GO:0006401">
    <property type="term" value="P:RNA catabolic process"/>
    <property type="evidence" value="ECO:0007669"/>
    <property type="project" value="UniProtKB-UniRule"/>
</dbReference>
<dbReference type="CDD" id="cd00268">
    <property type="entry name" value="DEADc"/>
    <property type="match status" value="1"/>
</dbReference>
<dbReference type="CDD" id="cd18787">
    <property type="entry name" value="SF2_C_DEAD"/>
    <property type="match status" value="1"/>
</dbReference>
<dbReference type="FunFam" id="3.40.50.300:FF:000008">
    <property type="entry name" value="ATP-dependent RNA helicase RhlB"/>
    <property type="match status" value="1"/>
</dbReference>
<dbReference type="FunFam" id="3.40.50.300:FF:000312">
    <property type="entry name" value="ATP-dependent RNA helicase RhlB"/>
    <property type="match status" value="1"/>
</dbReference>
<dbReference type="Gene3D" id="3.40.50.300">
    <property type="entry name" value="P-loop containing nucleotide triphosphate hydrolases"/>
    <property type="match status" value="2"/>
</dbReference>
<dbReference type="HAMAP" id="MF_00661">
    <property type="entry name" value="DEAD_helicase_RhlB"/>
    <property type="match status" value="1"/>
</dbReference>
<dbReference type="InterPro" id="IPR011545">
    <property type="entry name" value="DEAD/DEAH_box_helicase_dom"/>
</dbReference>
<dbReference type="InterPro" id="IPR050079">
    <property type="entry name" value="DEAD_box_RNA_helicase"/>
</dbReference>
<dbReference type="InterPro" id="IPR014001">
    <property type="entry name" value="Helicase_ATP-bd"/>
</dbReference>
<dbReference type="InterPro" id="IPR001650">
    <property type="entry name" value="Helicase_C-like"/>
</dbReference>
<dbReference type="InterPro" id="IPR027417">
    <property type="entry name" value="P-loop_NTPase"/>
</dbReference>
<dbReference type="InterPro" id="IPR000629">
    <property type="entry name" value="RNA-helicase_DEAD-box_CS"/>
</dbReference>
<dbReference type="InterPro" id="IPR023554">
    <property type="entry name" value="RNA_helicase_ATP-dep_RhlB"/>
</dbReference>
<dbReference type="InterPro" id="IPR014014">
    <property type="entry name" value="RNA_helicase_DEAD_Q_motif"/>
</dbReference>
<dbReference type="NCBIfam" id="NF003419">
    <property type="entry name" value="PRK04837.1"/>
    <property type="match status" value="1"/>
</dbReference>
<dbReference type="PANTHER" id="PTHR47959:SF10">
    <property type="entry name" value="ATP-DEPENDENT RNA HELICASE RHLB"/>
    <property type="match status" value="1"/>
</dbReference>
<dbReference type="PANTHER" id="PTHR47959">
    <property type="entry name" value="ATP-DEPENDENT RNA HELICASE RHLE-RELATED"/>
    <property type="match status" value="1"/>
</dbReference>
<dbReference type="Pfam" id="PF00270">
    <property type="entry name" value="DEAD"/>
    <property type="match status" value="1"/>
</dbReference>
<dbReference type="Pfam" id="PF00271">
    <property type="entry name" value="Helicase_C"/>
    <property type="match status" value="1"/>
</dbReference>
<dbReference type="SMART" id="SM00487">
    <property type="entry name" value="DEXDc"/>
    <property type="match status" value="1"/>
</dbReference>
<dbReference type="SMART" id="SM00490">
    <property type="entry name" value="HELICc"/>
    <property type="match status" value="1"/>
</dbReference>
<dbReference type="SUPFAM" id="SSF52540">
    <property type="entry name" value="P-loop containing nucleoside triphosphate hydrolases"/>
    <property type="match status" value="1"/>
</dbReference>
<dbReference type="PROSITE" id="PS00039">
    <property type="entry name" value="DEAD_ATP_HELICASE"/>
    <property type="match status" value="1"/>
</dbReference>
<dbReference type="PROSITE" id="PS51192">
    <property type="entry name" value="HELICASE_ATP_BIND_1"/>
    <property type="match status" value="1"/>
</dbReference>
<dbReference type="PROSITE" id="PS51194">
    <property type="entry name" value="HELICASE_CTER"/>
    <property type="match status" value="1"/>
</dbReference>
<dbReference type="PROSITE" id="PS51195">
    <property type="entry name" value="Q_MOTIF"/>
    <property type="match status" value="1"/>
</dbReference>
<feature type="chain" id="PRO_1000082841" description="ATP-dependent RNA helicase RhlB">
    <location>
        <begin position="1"/>
        <end position="421"/>
    </location>
</feature>
<feature type="domain" description="Helicase ATP-binding" evidence="1">
    <location>
        <begin position="40"/>
        <end position="219"/>
    </location>
</feature>
<feature type="domain" description="Helicase C-terminal" evidence="1">
    <location>
        <begin position="245"/>
        <end position="390"/>
    </location>
</feature>
<feature type="region of interest" description="Disordered" evidence="2">
    <location>
        <begin position="392"/>
        <end position="421"/>
    </location>
</feature>
<feature type="short sequence motif" description="Q motif">
    <location>
        <begin position="9"/>
        <end position="37"/>
    </location>
</feature>
<feature type="short sequence motif" description="DEAD box">
    <location>
        <begin position="165"/>
        <end position="168"/>
    </location>
</feature>
<feature type="compositionally biased region" description="Low complexity" evidence="2">
    <location>
        <begin position="402"/>
        <end position="414"/>
    </location>
</feature>
<feature type="binding site" evidence="1">
    <location>
        <begin position="53"/>
        <end position="60"/>
    </location>
    <ligand>
        <name>ATP</name>
        <dbReference type="ChEBI" id="CHEBI:30616"/>
    </ligand>
</feature>